<feature type="chain" id="PRO_0000256971" description="Chaperonin GroEL 2">
    <location>
        <begin position="1"/>
        <end position="551"/>
    </location>
</feature>
<feature type="binding site" evidence="1">
    <location>
        <begin position="30"/>
        <end position="33"/>
    </location>
    <ligand>
        <name>ATP</name>
        <dbReference type="ChEBI" id="CHEBI:30616"/>
    </ligand>
</feature>
<feature type="binding site" evidence="1">
    <location>
        <position position="51"/>
    </location>
    <ligand>
        <name>ATP</name>
        <dbReference type="ChEBI" id="CHEBI:30616"/>
    </ligand>
</feature>
<feature type="binding site" evidence="1">
    <location>
        <begin position="87"/>
        <end position="91"/>
    </location>
    <ligand>
        <name>ATP</name>
        <dbReference type="ChEBI" id="CHEBI:30616"/>
    </ligand>
</feature>
<feature type="binding site" evidence="1">
    <location>
        <position position="415"/>
    </location>
    <ligand>
        <name>ATP</name>
        <dbReference type="ChEBI" id="CHEBI:30616"/>
    </ligand>
</feature>
<feature type="binding site" evidence="1">
    <location>
        <position position="496"/>
    </location>
    <ligand>
        <name>ATP</name>
        <dbReference type="ChEBI" id="CHEBI:30616"/>
    </ligand>
</feature>
<sequence length="551" mass="57861">MAAKDVKFAGDARDRMLRGVDILANAVKVTLGPKGRNVLIERSFGAARITKDGVTVAKEIELEDKFENMGAQMLREVASKTNDLAGDGTTTATVLAQAIVREGAKSVAAGMNPMDLKRGIEIAVAAVIKDLVKRAKPVASSAEIAQVGTISSNGDAAIGKMIAQAMQKVGNEGVITVEENKSLTTEVDIVEGMKFDRGYLSPYFVTNAEKMAVEFDDAYVLLHEKKVSGLQSMLPLLEAVVQSGKPLVIIAEDVEGEALATLVVNRLRGGLKVAAVKAPGFGDRRKAMLEDLAILTGGQLISDDLGMKLENVTLKMLGRAKKLVIDKENTTIVGGAGKKADIETRVGQIKAQIEETTSDYDREKLQERLAKLAGGVAVIRVGGATEVEVKEKKDRVEDALNATRAAVQEGIVPGGGVALLRAKKAVGRISNDNPDVQAGINIVLKALEAPIRQIAENAGVEGSIVVGKILENKSETFGFDAQTEEYVDMLAKGIVDPAKVVRTALQDASSVAALLVTTECMVAEMPRDAAPAMPGGGGGMGGMGGMGGMGF</sequence>
<protein>
    <recommendedName>
        <fullName evidence="1">Chaperonin GroEL 2</fullName>
        <ecNumber evidence="1">5.6.1.7</ecNumber>
    </recommendedName>
    <alternativeName>
        <fullName evidence="1">60 kDa chaperonin 2</fullName>
    </alternativeName>
    <alternativeName>
        <fullName evidence="1">Chaperonin-60 2</fullName>
        <shortName evidence="1">Cpn60 2</shortName>
    </alternativeName>
</protein>
<reference key="1">
    <citation type="submission" date="2006-03" db="EMBL/GenBank/DDBJ databases">
        <title>Complete sequence of Rhodopseudomonas palustris BisB18.</title>
        <authorList>
            <consortium name="US DOE Joint Genome Institute"/>
            <person name="Copeland A."/>
            <person name="Lucas S."/>
            <person name="Lapidus A."/>
            <person name="Barry K."/>
            <person name="Detter J.C."/>
            <person name="Glavina del Rio T."/>
            <person name="Hammon N."/>
            <person name="Israni S."/>
            <person name="Dalin E."/>
            <person name="Tice H."/>
            <person name="Pitluck S."/>
            <person name="Chain P."/>
            <person name="Malfatti S."/>
            <person name="Shin M."/>
            <person name="Vergez L."/>
            <person name="Schmutz J."/>
            <person name="Larimer F."/>
            <person name="Land M."/>
            <person name="Hauser L."/>
            <person name="Pelletier D.A."/>
            <person name="Kyrpides N."/>
            <person name="Anderson I."/>
            <person name="Oda Y."/>
            <person name="Harwood C.S."/>
            <person name="Richardson P."/>
        </authorList>
    </citation>
    <scope>NUCLEOTIDE SEQUENCE [LARGE SCALE GENOMIC DNA]</scope>
    <source>
        <strain>BisB18</strain>
    </source>
</reference>
<name>CH602_RHOPB</name>
<dbReference type="EC" id="5.6.1.7" evidence="1"/>
<dbReference type="EMBL" id="CP000301">
    <property type="protein sequence ID" value="ABD90248.1"/>
    <property type="molecule type" value="Genomic_DNA"/>
</dbReference>
<dbReference type="SMR" id="Q20X88"/>
<dbReference type="STRING" id="316056.RPC_4726"/>
<dbReference type="KEGG" id="rpc:RPC_4726"/>
<dbReference type="eggNOG" id="COG0459">
    <property type="taxonomic scope" value="Bacteria"/>
</dbReference>
<dbReference type="HOGENOM" id="CLU_016503_3_0_5"/>
<dbReference type="OrthoDB" id="9766614at2"/>
<dbReference type="GO" id="GO:0005737">
    <property type="term" value="C:cytoplasm"/>
    <property type="evidence" value="ECO:0007669"/>
    <property type="project" value="UniProtKB-SubCell"/>
</dbReference>
<dbReference type="GO" id="GO:0005524">
    <property type="term" value="F:ATP binding"/>
    <property type="evidence" value="ECO:0007669"/>
    <property type="project" value="UniProtKB-UniRule"/>
</dbReference>
<dbReference type="GO" id="GO:0140662">
    <property type="term" value="F:ATP-dependent protein folding chaperone"/>
    <property type="evidence" value="ECO:0007669"/>
    <property type="project" value="InterPro"/>
</dbReference>
<dbReference type="GO" id="GO:0016853">
    <property type="term" value="F:isomerase activity"/>
    <property type="evidence" value="ECO:0007669"/>
    <property type="project" value="UniProtKB-KW"/>
</dbReference>
<dbReference type="GO" id="GO:0051082">
    <property type="term" value="F:unfolded protein binding"/>
    <property type="evidence" value="ECO:0007669"/>
    <property type="project" value="UniProtKB-UniRule"/>
</dbReference>
<dbReference type="GO" id="GO:0042026">
    <property type="term" value="P:protein refolding"/>
    <property type="evidence" value="ECO:0007669"/>
    <property type="project" value="UniProtKB-UniRule"/>
</dbReference>
<dbReference type="CDD" id="cd03344">
    <property type="entry name" value="GroEL"/>
    <property type="match status" value="1"/>
</dbReference>
<dbReference type="FunFam" id="1.10.560.10:FF:000001">
    <property type="entry name" value="60 kDa chaperonin"/>
    <property type="match status" value="1"/>
</dbReference>
<dbReference type="FunFam" id="3.50.7.10:FF:000001">
    <property type="entry name" value="60 kDa chaperonin"/>
    <property type="match status" value="1"/>
</dbReference>
<dbReference type="Gene3D" id="3.50.7.10">
    <property type="entry name" value="GroEL"/>
    <property type="match status" value="1"/>
</dbReference>
<dbReference type="Gene3D" id="1.10.560.10">
    <property type="entry name" value="GroEL-like equatorial domain"/>
    <property type="match status" value="1"/>
</dbReference>
<dbReference type="Gene3D" id="3.30.260.10">
    <property type="entry name" value="TCP-1-like chaperonin intermediate domain"/>
    <property type="match status" value="1"/>
</dbReference>
<dbReference type="HAMAP" id="MF_00600">
    <property type="entry name" value="CH60"/>
    <property type="match status" value="1"/>
</dbReference>
<dbReference type="InterPro" id="IPR018370">
    <property type="entry name" value="Chaperonin_Cpn60_CS"/>
</dbReference>
<dbReference type="InterPro" id="IPR001844">
    <property type="entry name" value="Cpn60/GroEL"/>
</dbReference>
<dbReference type="InterPro" id="IPR002423">
    <property type="entry name" value="Cpn60/GroEL/TCP-1"/>
</dbReference>
<dbReference type="InterPro" id="IPR027409">
    <property type="entry name" value="GroEL-like_apical_dom_sf"/>
</dbReference>
<dbReference type="InterPro" id="IPR027413">
    <property type="entry name" value="GROEL-like_equatorial_sf"/>
</dbReference>
<dbReference type="InterPro" id="IPR027410">
    <property type="entry name" value="TCP-1-like_intermed_sf"/>
</dbReference>
<dbReference type="NCBIfam" id="TIGR02348">
    <property type="entry name" value="GroEL"/>
    <property type="match status" value="1"/>
</dbReference>
<dbReference type="NCBIfam" id="NF000592">
    <property type="entry name" value="PRK00013.1"/>
    <property type="match status" value="1"/>
</dbReference>
<dbReference type="NCBIfam" id="NF009487">
    <property type="entry name" value="PRK12849.1"/>
    <property type="match status" value="1"/>
</dbReference>
<dbReference type="NCBIfam" id="NF009488">
    <property type="entry name" value="PRK12850.1"/>
    <property type="match status" value="1"/>
</dbReference>
<dbReference type="NCBIfam" id="NF009489">
    <property type="entry name" value="PRK12851.1"/>
    <property type="match status" value="1"/>
</dbReference>
<dbReference type="PANTHER" id="PTHR45633">
    <property type="entry name" value="60 KDA HEAT SHOCK PROTEIN, MITOCHONDRIAL"/>
    <property type="match status" value="1"/>
</dbReference>
<dbReference type="Pfam" id="PF00118">
    <property type="entry name" value="Cpn60_TCP1"/>
    <property type="match status" value="1"/>
</dbReference>
<dbReference type="PRINTS" id="PR00298">
    <property type="entry name" value="CHAPERONIN60"/>
</dbReference>
<dbReference type="SUPFAM" id="SSF52029">
    <property type="entry name" value="GroEL apical domain-like"/>
    <property type="match status" value="1"/>
</dbReference>
<dbReference type="SUPFAM" id="SSF48592">
    <property type="entry name" value="GroEL equatorial domain-like"/>
    <property type="match status" value="1"/>
</dbReference>
<dbReference type="SUPFAM" id="SSF54849">
    <property type="entry name" value="GroEL-intermediate domain like"/>
    <property type="match status" value="1"/>
</dbReference>
<dbReference type="PROSITE" id="PS00296">
    <property type="entry name" value="CHAPERONINS_CPN60"/>
    <property type="match status" value="1"/>
</dbReference>
<gene>
    <name evidence="1" type="primary">groEL2</name>
    <name evidence="1" type="synonym">groL2</name>
    <name type="ordered locus">RPC_4726</name>
</gene>
<proteinExistence type="inferred from homology"/>
<organism>
    <name type="scientific">Rhodopseudomonas palustris (strain BisB18)</name>
    <dbReference type="NCBI Taxonomy" id="316056"/>
    <lineage>
        <taxon>Bacteria</taxon>
        <taxon>Pseudomonadati</taxon>
        <taxon>Pseudomonadota</taxon>
        <taxon>Alphaproteobacteria</taxon>
        <taxon>Hyphomicrobiales</taxon>
        <taxon>Nitrobacteraceae</taxon>
        <taxon>Rhodopseudomonas</taxon>
    </lineage>
</organism>
<accession>Q20X88</accession>
<keyword id="KW-0067">ATP-binding</keyword>
<keyword id="KW-0143">Chaperone</keyword>
<keyword id="KW-0963">Cytoplasm</keyword>
<keyword id="KW-0413">Isomerase</keyword>
<keyword id="KW-0547">Nucleotide-binding</keyword>
<comment type="function">
    <text evidence="1">Together with its co-chaperonin GroES, plays an essential role in assisting protein folding. The GroEL-GroES system forms a nano-cage that allows encapsulation of the non-native substrate proteins and provides a physical environment optimized to promote and accelerate protein folding.</text>
</comment>
<comment type="catalytic activity">
    <reaction evidence="1">
        <text>ATP + H2O + a folded polypeptide = ADP + phosphate + an unfolded polypeptide.</text>
        <dbReference type="EC" id="5.6.1.7"/>
    </reaction>
</comment>
<comment type="subunit">
    <text evidence="1">Forms a cylinder of 14 subunits composed of two heptameric rings stacked back-to-back. Interacts with the co-chaperonin GroES.</text>
</comment>
<comment type="subcellular location">
    <subcellularLocation>
        <location evidence="1">Cytoplasm</location>
    </subcellularLocation>
</comment>
<comment type="similarity">
    <text evidence="1">Belongs to the chaperonin (HSP60) family.</text>
</comment>
<evidence type="ECO:0000255" key="1">
    <source>
        <dbReference type="HAMAP-Rule" id="MF_00600"/>
    </source>
</evidence>